<dbReference type="EMBL" id="DQ234980">
    <property type="protein sequence ID" value="ABB72140.1"/>
    <property type="molecule type" value="Genomic_DNA"/>
</dbReference>
<dbReference type="RefSeq" id="NP_001129085.1">
    <property type="nucleotide sequence ID" value="NM_001135613.1"/>
</dbReference>
<dbReference type="FunCoup" id="A7X8B3">
    <property type="interactions" value="957"/>
</dbReference>
<dbReference type="STRING" id="9598.ENSPTRP00000007237"/>
<dbReference type="PaxDb" id="9598-ENSPTRP00000007237"/>
<dbReference type="GeneID" id="451502"/>
<dbReference type="KEGG" id="ptr:451502"/>
<dbReference type="CTD" id="5241"/>
<dbReference type="eggNOG" id="KOG3575">
    <property type="taxonomic scope" value="Eukaryota"/>
</dbReference>
<dbReference type="InParanoid" id="A7X8B3"/>
<dbReference type="OrthoDB" id="15254at9604"/>
<dbReference type="Proteomes" id="UP000002277">
    <property type="component" value="Unplaced"/>
</dbReference>
<dbReference type="GO" id="GO:0000785">
    <property type="term" value="C:chromatin"/>
    <property type="evidence" value="ECO:0000318"/>
    <property type="project" value="GO_Central"/>
</dbReference>
<dbReference type="GO" id="GO:0005737">
    <property type="term" value="C:cytoplasm"/>
    <property type="evidence" value="ECO:0007669"/>
    <property type="project" value="UniProtKB-SubCell"/>
</dbReference>
<dbReference type="GO" id="GO:0005654">
    <property type="term" value="C:nucleoplasm"/>
    <property type="evidence" value="ECO:0007669"/>
    <property type="project" value="UniProtKB-ARBA"/>
</dbReference>
<dbReference type="GO" id="GO:0005634">
    <property type="term" value="C:nucleus"/>
    <property type="evidence" value="ECO:0000318"/>
    <property type="project" value="GO_Central"/>
</dbReference>
<dbReference type="GO" id="GO:0034056">
    <property type="term" value="F:estrogen response element binding"/>
    <property type="evidence" value="ECO:0000318"/>
    <property type="project" value="GO_Central"/>
</dbReference>
<dbReference type="GO" id="GO:0004879">
    <property type="term" value="F:nuclear receptor activity"/>
    <property type="evidence" value="ECO:0000318"/>
    <property type="project" value="GO_Central"/>
</dbReference>
<dbReference type="GO" id="GO:0003707">
    <property type="term" value="F:nuclear steroid receptor activity"/>
    <property type="evidence" value="ECO:0007669"/>
    <property type="project" value="InterPro"/>
</dbReference>
<dbReference type="GO" id="GO:0005496">
    <property type="term" value="F:steroid binding"/>
    <property type="evidence" value="ECO:0007669"/>
    <property type="project" value="UniProtKB-KW"/>
</dbReference>
<dbReference type="GO" id="GO:0008270">
    <property type="term" value="F:zinc ion binding"/>
    <property type="evidence" value="ECO:0007669"/>
    <property type="project" value="UniProtKB-KW"/>
</dbReference>
<dbReference type="GO" id="GO:0030518">
    <property type="term" value="P:nuclear receptor-mediated steroid hormone signaling pathway"/>
    <property type="evidence" value="ECO:0000318"/>
    <property type="project" value="GO_Central"/>
</dbReference>
<dbReference type="GO" id="GO:0006357">
    <property type="term" value="P:regulation of transcription by RNA polymerase II"/>
    <property type="evidence" value="ECO:0000318"/>
    <property type="project" value="GO_Central"/>
</dbReference>
<dbReference type="CDD" id="cd07172">
    <property type="entry name" value="NR_DBD_GR_PR"/>
    <property type="match status" value="1"/>
</dbReference>
<dbReference type="CDD" id="cd07074">
    <property type="entry name" value="NR_LBD_PR"/>
    <property type="match status" value="1"/>
</dbReference>
<dbReference type="FunFam" id="1.10.565.10:FF:000004">
    <property type="entry name" value="Androgen receptor variant"/>
    <property type="match status" value="1"/>
</dbReference>
<dbReference type="FunFam" id="3.30.50.10:FF:000027">
    <property type="entry name" value="Progesterone receptor"/>
    <property type="match status" value="1"/>
</dbReference>
<dbReference type="Gene3D" id="3.30.50.10">
    <property type="entry name" value="Erythroid Transcription Factor GATA-1, subunit A"/>
    <property type="match status" value="1"/>
</dbReference>
<dbReference type="Gene3D" id="1.10.565.10">
    <property type="entry name" value="Retinoid X Receptor"/>
    <property type="match status" value="1"/>
</dbReference>
<dbReference type="InterPro" id="IPR035500">
    <property type="entry name" value="NHR-like_dom_sf"/>
</dbReference>
<dbReference type="InterPro" id="IPR000536">
    <property type="entry name" value="Nucl_hrmn_rcpt_lig-bd"/>
</dbReference>
<dbReference type="InterPro" id="IPR050200">
    <property type="entry name" value="Nuclear_hormone_rcpt_NR3"/>
</dbReference>
<dbReference type="InterPro" id="IPR001723">
    <property type="entry name" value="Nuclear_hrmn_rcpt"/>
</dbReference>
<dbReference type="InterPro" id="IPR000128">
    <property type="entry name" value="Progest_rcpt"/>
</dbReference>
<dbReference type="InterPro" id="IPR001628">
    <property type="entry name" value="Znf_hrmn_rcpt"/>
</dbReference>
<dbReference type="InterPro" id="IPR013088">
    <property type="entry name" value="Znf_NHR/GATA"/>
</dbReference>
<dbReference type="PANTHER" id="PTHR48092">
    <property type="entry name" value="KNIRPS-RELATED PROTEIN-RELATED"/>
    <property type="match status" value="1"/>
</dbReference>
<dbReference type="Pfam" id="PF00104">
    <property type="entry name" value="Hormone_recep"/>
    <property type="match status" value="1"/>
</dbReference>
<dbReference type="Pfam" id="PF02161">
    <property type="entry name" value="Prog_receptor"/>
    <property type="match status" value="1"/>
</dbReference>
<dbReference type="Pfam" id="PF00105">
    <property type="entry name" value="zf-C4"/>
    <property type="match status" value="1"/>
</dbReference>
<dbReference type="PRINTS" id="PR00544">
    <property type="entry name" value="PROGESTRONER"/>
</dbReference>
<dbReference type="PRINTS" id="PR00398">
    <property type="entry name" value="STRDHORMONER"/>
</dbReference>
<dbReference type="PRINTS" id="PR00047">
    <property type="entry name" value="STROIDFINGER"/>
</dbReference>
<dbReference type="SMART" id="SM00430">
    <property type="entry name" value="HOLI"/>
    <property type="match status" value="1"/>
</dbReference>
<dbReference type="SMART" id="SM00399">
    <property type="entry name" value="ZnF_C4"/>
    <property type="match status" value="1"/>
</dbReference>
<dbReference type="SUPFAM" id="SSF57716">
    <property type="entry name" value="Glucocorticoid receptor-like (DNA-binding domain)"/>
    <property type="match status" value="1"/>
</dbReference>
<dbReference type="SUPFAM" id="SSF48508">
    <property type="entry name" value="Nuclear receptor ligand-binding domain"/>
    <property type="match status" value="1"/>
</dbReference>
<dbReference type="PROSITE" id="PS51843">
    <property type="entry name" value="NR_LBD"/>
    <property type="match status" value="1"/>
</dbReference>
<dbReference type="PROSITE" id="PS00031">
    <property type="entry name" value="NUCLEAR_REC_DBD_1"/>
    <property type="match status" value="1"/>
</dbReference>
<dbReference type="PROSITE" id="PS51030">
    <property type="entry name" value="NUCLEAR_REC_DBD_2"/>
    <property type="match status" value="1"/>
</dbReference>
<organism>
    <name type="scientific">Pan troglodytes</name>
    <name type="common">Chimpanzee</name>
    <dbReference type="NCBI Taxonomy" id="9598"/>
    <lineage>
        <taxon>Eukaryota</taxon>
        <taxon>Metazoa</taxon>
        <taxon>Chordata</taxon>
        <taxon>Craniata</taxon>
        <taxon>Vertebrata</taxon>
        <taxon>Euteleostomi</taxon>
        <taxon>Mammalia</taxon>
        <taxon>Eutheria</taxon>
        <taxon>Euarchontoglires</taxon>
        <taxon>Primates</taxon>
        <taxon>Haplorrhini</taxon>
        <taxon>Catarrhini</taxon>
        <taxon>Hominidae</taxon>
        <taxon>Pan</taxon>
    </lineage>
</organism>
<accession>A7X8B3</accession>
<feature type="chain" id="PRO_0000375858" description="Progesterone receptor">
    <location>
        <begin position="1"/>
        <end position="933"/>
    </location>
</feature>
<feature type="domain" description="NR LBD" evidence="6">
    <location>
        <begin position="679"/>
        <end position="913"/>
    </location>
</feature>
<feature type="DNA-binding region" description="Nuclear receptor" evidence="5">
    <location>
        <begin position="567"/>
        <end position="639"/>
    </location>
</feature>
<feature type="zinc finger region" description="NR C4-type" evidence="5">
    <location>
        <begin position="567"/>
        <end position="587"/>
    </location>
</feature>
<feature type="zinc finger region" description="NR C4-type" evidence="5">
    <location>
        <begin position="603"/>
        <end position="627"/>
    </location>
</feature>
<feature type="region of interest" description="Modulating, Pro-Rich">
    <location>
        <begin position="1"/>
        <end position="566"/>
    </location>
</feature>
<feature type="region of interest" description="Disordered" evidence="7">
    <location>
        <begin position="1"/>
        <end position="256"/>
    </location>
</feature>
<feature type="region of interest" description="AF3; mediates transcriptional activation" evidence="2">
    <location>
        <begin position="1"/>
        <end position="164"/>
    </location>
</feature>
<feature type="region of interest" description="Mediates transcriptional transrepression" evidence="2">
    <location>
        <begin position="165"/>
        <end position="305"/>
    </location>
</feature>
<feature type="region of interest" description="Disordered" evidence="7">
    <location>
        <begin position="335"/>
        <end position="378"/>
    </location>
</feature>
<feature type="region of interest" description="Disordered" evidence="7">
    <location>
        <begin position="415"/>
        <end position="452"/>
    </location>
</feature>
<feature type="region of interest" description="AF1; mediates transcriptional activation" evidence="2">
    <location>
        <begin position="456"/>
        <end position="546"/>
    </location>
</feature>
<feature type="region of interest" description="AF2; mediates transcriptional activation" evidence="2">
    <location>
        <begin position="687"/>
        <end position="933"/>
    </location>
</feature>
<feature type="short sequence motif" description="LXXL motif 1" evidence="2">
    <location>
        <begin position="55"/>
        <end position="59"/>
    </location>
</feature>
<feature type="short sequence motif" description="LXXL motif 2" evidence="2">
    <location>
        <begin position="115"/>
        <end position="119"/>
    </location>
</feature>
<feature type="short sequence motif" description="Nuclear localization signal" evidence="4">
    <location>
        <begin position="183"/>
        <end position="187"/>
    </location>
</feature>
<feature type="compositionally biased region" description="Acidic residues" evidence="7">
    <location>
        <begin position="220"/>
        <end position="231"/>
    </location>
</feature>
<feature type="compositionally biased region" description="Low complexity" evidence="7">
    <location>
        <begin position="232"/>
        <end position="246"/>
    </location>
</feature>
<feature type="compositionally biased region" description="Low complexity" evidence="7">
    <location>
        <begin position="335"/>
        <end position="356"/>
    </location>
</feature>
<feature type="compositionally biased region" description="Pro residues" evidence="7">
    <location>
        <begin position="418"/>
        <end position="433"/>
    </location>
</feature>
<feature type="compositionally biased region" description="Low complexity" evidence="7">
    <location>
        <begin position="434"/>
        <end position="452"/>
    </location>
</feature>
<feature type="binding site" evidence="2">
    <location>
        <position position="766"/>
    </location>
    <ligand>
        <name>progesterone</name>
        <dbReference type="ChEBI" id="CHEBI:17026"/>
    </ligand>
</feature>
<feature type="modified residue" description="Phosphoserine" evidence="2">
    <location>
        <position position="20"/>
    </location>
</feature>
<feature type="modified residue" description="Phosphoserine" evidence="2">
    <location>
        <position position="81"/>
    </location>
</feature>
<feature type="modified residue" description="Phosphoserine" evidence="2">
    <location>
        <position position="130"/>
    </location>
</feature>
<feature type="modified residue" description="Phosphoserine" evidence="2">
    <location>
        <position position="162"/>
    </location>
</feature>
<feature type="modified residue" description="Phosphoserine" evidence="2">
    <location>
        <position position="190"/>
    </location>
</feature>
<feature type="modified residue" description="Phosphoserine" evidence="2">
    <location>
        <position position="213"/>
    </location>
</feature>
<feature type="modified residue" description="Phosphoserine; by MAPK1" evidence="2">
    <location>
        <position position="294"/>
    </location>
</feature>
<feature type="modified residue" description="Phosphoserine; by MAPK" evidence="2">
    <location>
        <position position="345"/>
    </location>
</feature>
<feature type="modified residue" description="Phosphoserine; by CDK2" evidence="2">
    <location>
        <position position="400"/>
    </location>
</feature>
<feature type="modified residue" description="Phosphoserine" evidence="2">
    <location>
        <position position="676"/>
    </location>
</feature>
<feature type="cross-link" description="Glycyl lysine isopeptide (Lys-Gly) (interchain with G-Cter in SUMO); alternate" evidence="1">
    <location>
        <position position="388"/>
    </location>
</feature>
<feature type="cross-link" description="Glycyl lysine isopeptide (Lys-Gly) (interchain with G-Cter in ubiquitin); alternate" evidence="2">
    <location>
        <position position="388"/>
    </location>
</feature>
<feature type="cross-link" description="Glycyl lysine isopeptide (Lys-Gly) (interchain with G-Cter in SUMO)" evidence="1">
    <location>
        <position position="531"/>
    </location>
</feature>
<comment type="function">
    <text evidence="2">The steroid hormones and their receptors are involved in the regulation of eukaryotic gene expression and affect cellular proliferation and differentiation in target tissues. Transcriptional activator of several progesteron-dependent promoters in a variety of cell types. Involved in activation of SRC-dependent MAPK signaling on hormone stimulation.</text>
</comment>
<comment type="subunit">
    <text evidence="2 3">Interacts with SMARD1 and UNC45A. Interacts with CUEDC2; the interaction promotes ubiquitination, decreases sumoylation, and represses transcriptional activity. Interacts with PIAS3; the interaction promotes sumoylation of PR in a hormone-dependent manner, inhibits DNA-binding, and alters nuclear export. Interacts with SP1; the interaction requires ligand-induced phosphorylation on Ser-345 by ERK1/2-MAPK. Interacts with PRMT2. Interacts with NCOA2 and NCOA1. Interacts with KLF9. Interacts with GTF2B (By similarity).</text>
</comment>
<comment type="subcellular location">
    <subcellularLocation>
        <location>Nucleus</location>
    </subcellularLocation>
    <subcellularLocation>
        <location>Cytoplasm</location>
    </subcellularLocation>
    <text evidence="1">Nucleoplasmic shuttling is both hormone- and cell cycle-dependent. On hormone stimulation, retained in the cytoplasm in the G(1) and G(2)/M phases (By similarity).</text>
</comment>
<comment type="domain">
    <text>Composed of three domains: a modulating N-terminal domain, a DNA-binding domain and a C-terminal ligand-binding domain.</text>
</comment>
<comment type="PTM">
    <text evidence="1">Phosphorylated on multiple serine sites. Several of these sites are hormone-dependent. Phosphorylation on Ser-294 is highly hormone-dependent and modulates ubiquitination and sumoylation on Lys-388. Phosphorylation on Ser-102 and Ser-345 requires induction by hormone. Basal phosphorylation on Ser-81, Ser-162, Ser-190 and Ser-400 is increased in response to progesterone and can be phosphorylated in vitro by the CDK2-A1 complex. Increased levels of phosphorylation on Ser-400 also in the presence of EGF, heregulin, IGF, PMA and FBS. Phosphorylation at this site by CDK2 is ligand-independent, and increases nuclear translocation and transcriptional activity. Phosphorylation at Ser-162 and Ser-294, but not at Ser-190, is impaired during the G(2)/M phase of the cell cycle. Phosphorylation on Ser-345 by ERK1/2 MAPK is required for interaction with SP1 (By similarity).</text>
</comment>
<comment type="PTM">
    <text evidence="1">Sumoylation is hormone-dependent and represses transcriptional activity. Sumoylation on all three sites is enhanced by PIAS3. Desumoylated by SENP1. Sumoylation on Lys-388, the main site of sumoylation, is repressed by ubiquitination on the same site, and modulated by phosphorylation at Ser-294 (By similarity).</text>
</comment>
<comment type="PTM">
    <text evidence="2">Ubiquitination is hormone-dependent and represses sumoylation on the same site (By similarity). Promoted by MAPK-mediated phosphorylation on Ser-294 (By similarity). Ubiquitinated by UBR5, leading to its degradation: UBR5 specifically recognizes and binds ligand-bound PGR when it is not associated with coactivators (NCOAs) (By similarity). In presence of NCOAs, the UBR5-degron is not accessible, preventing its ubiquitination and degradation (By similarity).</text>
</comment>
<comment type="PTM">
    <text evidence="1">Palmitoylated by ZDHHC7 and ZDHHC21. Palmitoylation is required for plasma membrane targeting and for rapid intracellular signaling via ERK and AKT kinases and cAMP generation (By similarity).</text>
</comment>
<comment type="similarity">
    <text evidence="8">Belongs to the nuclear hormone receptor family.</text>
</comment>
<protein>
    <recommendedName>
        <fullName>Progesterone receptor</fullName>
        <shortName>PR</shortName>
    </recommendedName>
    <alternativeName>
        <fullName>Nuclear receptor subfamily 3 group C member 3</fullName>
    </alternativeName>
</protein>
<reference key="1">
    <citation type="journal article" date="2008" name="Mol. Phylogenet. Evol.">
        <title>The human progesterone receptor shows evidence of adaptive evolution associated with its ability to act as a transcription factor.</title>
        <authorList>
            <person name="Chen C."/>
            <person name="Opazo J.C."/>
            <person name="Erez O."/>
            <person name="Uddin M."/>
            <person name="Santolaya-Forgas J."/>
            <person name="Goodman M."/>
            <person name="Grossman L.I."/>
            <person name="Romero R."/>
            <person name="Wildman D.E."/>
        </authorList>
    </citation>
    <scope>NUCLEOTIDE SEQUENCE [GENOMIC DNA]</scope>
</reference>
<name>PRGR_PANTR</name>
<gene>
    <name type="primary">PGR</name>
    <name type="synonym">NR3C3</name>
</gene>
<evidence type="ECO:0000250" key="1"/>
<evidence type="ECO:0000250" key="2">
    <source>
        <dbReference type="UniProtKB" id="P06401"/>
    </source>
</evidence>
<evidence type="ECO:0000250" key="3">
    <source>
        <dbReference type="UniProtKB" id="Q00175"/>
    </source>
</evidence>
<evidence type="ECO:0000255" key="4"/>
<evidence type="ECO:0000255" key="5">
    <source>
        <dbReference type="PROSITE-ProRule" id="PRU00407"/>
    </source>
</evidence>
<evidence type="ECO:0000255" key="6">
    <source>
        <dbReference type="PROSITE-ProRule" id="PRU01189"/>
    </source>
</evidence>
<evidence type="ECO:0000256" key="7">
    <source>
        <dbReference type="SAM" id="MobiDB-lite"/>
    </source>
</evidence>
<evidence type="ECO:0000305" key="8"/>
<keyword id="KW-0963">Cytoplasm</keyword>
<keyword id="KW-0238">DNA-binding</keyword>
<keyword id="KW-1017">Isopeptide bond</keyword>
<keyword id="KW-0446">Lipid-binding</keyword>
<keyword id="KW-0449">Lipoprotein</keyword>
<keyword id="KW-0479">Metal-binding</keyword>
<keyword id="KW-0539">Nucleus</keyword>
<keyword id="KW-0564">Palmitate</keyword>
<keyword id="KW-0597">Phosphoprotein</keyword>
<keyword id="KW-0675">Receptor</keyword>
<keyword id="KW-1185">Reference proteome</keyword>
<keyword id="KW-0754">Steroid-binding</keyword>
<keyword id="KW-0804">Transcription</keyword>
<keyword id="KW-0805">Transcription regulation</keyword>
<keyword id="KW-0832">Ubl conjugation</keyword>
<keyword id="KW-0862">Zinc</keyword>
<keyword id="KW-0863">Zinc-finger</keyword>
<proteinExistence type="inferred from homology"/>
<sequence>MTELKAKGPRAPHVAGGPPSPEVGSPLLCRPAAGPFPGSQTSDTLPEVSAIPISLDGLLFPRPCQGQDPSNEKTQDQQSLSDVEGAYSRAEATRGAGGSSSSPPEKDSGLLDSVLDTLLAPSGPGQSQPSPPACEVTSSWCLFGPELPEDPPAAPATQGVLSPLMSRSGCKAGDSSGTAAAHKVLPRGLSPSRQLLLPASGSPHWSGAPVKPSPQPAAVEVEEEDGSESEESAGPLLKGKPRALGGAAAGGGAAAVPPGAAAGGVALVPKEDSRFSAPRVALVEQDAPMAPXRSPLATTMMDFIHVPILPLNHALLAARTRQLLEDESYDGGAGAXSAFAPPRSSPSASSTPVAVGDFPDCAYPPDAEPKDDAYPLYSDFQPPALKIKEEEEGAEASARSPRSYLVAGANPAAFPDFPLGPPPPLPPRAPPSRPGEAAVTAAPASASVSSASSSGSTLECILYKAEGAPPQQGPFAPPPCKAPGASGCLLPRDGLPSTSASAAAAGAAPALYPALGLNGLPQLGYQAAVLKEGLPQVYPPYLNYLRPDSEASQSPQYSFESLPQKICLICGDEASGCHYGVLTCGSCKVFFKRAMEGQHNYLCAGRNDCIVDKIRRKNCPACRLRKCCQAGMVLGGRKFKKFNKVRVVRALDAVALPQPVGIPNESQALSQRFTFSPGQDIQLIPPLINLLMSIEPDVIYAGHDNTKPDTSSSLLTSLNQLGERQLLSVVKWSKSLPGFRNLHIDDQITLIQYSWMSLMVFGLGWRSYKHVSGQMLYFAPDLILNEQRMKESSFYSLCLTMWQIPQEFVKLQVSQEEFLCMKVLLLLNTIPLEGLRSQTQFEEMRSSYIRELIKAIGLRQKGVVSSSQRFYQLTKLLDNLHDLVKQLHLYCLNTFIQSRALSVEFPEMMSEVIAAQLPKILAGMVKPLLFHKK</sequence>